<comment type="function">
    <text evidence="1">DNA-dependent RNA polymerase catalyzes the transcription of DNA into RNA using the four ribonucleoside triphosphates as substrates.</text>
</comment>
<comment type="catalytic activity">
    <reaction evidence="1">
        <text>RNA(n) + a ribonucleoside 5'-triphosphate = RNA(n+1) + diphosphate</text>
        <dbReference type="Rhea" id="RHEA:21248"/>
        <dbReference type="Rhea" id="RHEA-COMP:14527"/>
        <dbReference type="Rhea" id="RHEA-COMP:17342"/>
        <dbReference type="ChEBI" id="CHEBI:33019"/>
        <dbReference type="ChEBI" id="CHEBI:61557"/>
        <dbReference type="ChEBI" id="CHEBI:140395"/>
        <dbReference type="EC" id="2.7.7.6"/>
    </reaction>
</comment>
<comment type="cofactor">
    <cofactor evidence="1">
        <name>Zn(2+)</name>
        <dbReference type="ChEBI" id="CHEBI:29105"/>
    </cofactor>
    <text evidence="1">Binds 1 Zn(2+) ion per subunit.</text>
</comment>
<comment type="subunit">
    <text evidence="1">In plastids the minimal PEP RNA polymerase catalytic core is composed of four subunits: alpha, beta, beta', and beta''. When a (nuclear-encoded) sigma factor is associated with the core the holoenzyme is formed, which can initiate transcription.</text>
</comment>
<comment type="subcellular location">
    <subcellularLocation>
        <location evidence="1">Plastid</location>
        <location evidence="1">Chloroplast</location>
    </subcellularLocation>
</comment>
<comment type="similarity">
    <text evidence="1">Belongs to the RNA polymerase beta' chain family. RpoC2 subfamily.</text>
</comment>
<evidence type="ECO:0000255" key="1">
    <source>
        <dbReference type="HAMAP-Rule" id="MF_01324"/>
    </source>
</evidence>
<geneLocation type="chloroplast"/>
<sequence>MKEKYLFIPPKPKFTNKTIDKKELKKLMAWAFSNYGTGRASYLADKIKDLGFQYATKAGLSLSVEDLRVPPTKRELLKRTNEEINLTQQKYERGEITTVERFQKVIDTWNNASEELKDEVVKYFKETDPLNTIYIMAFSGARGNISQVRQLVGMRGLMADPQGQIIDLPIKSNFREGLTVTDYIISSYGARKGLVDTALRTADSGYLTRRLVDVAQDIIIREIDCDTDRGILLKDMVSNNQILIPLQNRLLGRVLFETLHSPDSANVIAHINQDLDHNTAEFIVKSGIKSVIVRSPLTCESSRSVCQFCYGWNLAHGSLVDLGEAVGIIAAQSIGEPGTQLTMRTFHTGGVFTGELAEQIRAPFDGVLRIPKSFRTRLIRTRHGEEAFVLEDSYKLDLYDSSYKKHKIEFKQGTILFLNDNEQFKKSQVIGELSTKSSMITERVTKDLNTENSGEVCFSNLYIEEKIDRQGNSITNTPKGGCLWILSGEVYNLPSYADIKIKEKQFVEEDEVLATSKVISDYGGLVRLNQSNQTSNITELQIVTSSVSLDNATIVTDDQKSTNSDPSYTLEMECGIKFHMLCSPGNKIVNSQIIAELIDTKYQTSTGGIVKYDGFEVNKKNKNKKGYEILGEGALLWIPEETHEINKDISLLLVEEGQCITAGTQIVKELYSLTEGYIQIIQENEIVKEVIVKPGKEHVRSTTSNNLNEYPKIVKPNDPDYAEYNAQGTIYIEELHYKKGNALLIRPVIEFRIDNEKIDLKTNYLTNENHHITIKPTKRVLFKDGQRVKSKYGVDLLKTYLIMSVDFDKPHLSADVEFVPAHEDDIYKLHLTVLETLQIKQDDFGESKKKSTITSLCVKQNELIKAGSTVAETHLLAHSAGFVQSINQTSQSTCKVLILTNSDEKSIDIYNQTPQVSQGDFIRSGDQIANGIIAETSGQIVEIETNKIKIRSGTPYLVSSNAILQVKNGNLVETGDTLAILVFERSKTGDIVQGLPRIEEILEARKPKEPSKLSQRPGKITLNYDSEDNKCIRILSSNGEYNEYIMSGIQKIIVSNGENILLAEPITDGAPNPHEMLGLFFNFYKERMPLYEAAKLALQKVQIYLVNEVQNVYQSQNVDISDKHIEVIVRQMTSKVKVEDGGDTTLLPGELVELQQIENINEAMTLTKGLPARYSPVLLGITKSSLNTDSFISAASFQETTRVLTEAAIEGKADWLRGLKENVIIGRLIPAGTGFNSYNDISKSFVLEKKNQMPDSYEQNQNEEQNIEDIILDDNIARNYALIENPINNFDTIEQNINQSKDI</sequence>
<dbReference type="EC" id="2.7.7.6" evidence="1"/>
<dbReference type="EMBL" id="EF508371">
    <property type="protein sequence ID" value="ABO70813.1"/>
    <property type="molecule type" value="Genomic_DNA"/>
</dbReference>
<dbReference type="RefSeq" id="YP_001293551.1">
    <property type="nucleotide sequence ID" value="NC_009573.1"/>
</dbReference>
<dbReference type="SMR" id="A6MVX2"/>
<dbReference type="GeneID" id="5228635"/>
<dbReference type="GO" id="GO:0009507">
    <property type="term" value="C:chloroplast"/>
    <property type="evidence" value="ECO:0007669"/>
    <property type="project" value="UniProtKB-SubCell"/>
</dbReference>
<dbReference type="GO" id="GO:0000428">
    <property type="term" value="C:DNA-directed RNA polymerase complex"/>
    <property type="evidence" value="ECO:0007669"/>
    <property type="project" value="UniProtKB-KW"/>
</dbReference>
<dbReference type="GO" id="GO:0005739">
    <property type="term" value="C:mitochondrion"/>
    <property type="evidence" value="ECO:0007669"/>
    <property type="project" value="GOC"/>
</dbReference>
<dbReference type="GO" id="GO:0003677">
    <property type="term" value="F:DNA binding"/>
    <property type="evidence" value="ECO:0007669"/>
    <property type="project" value="UniProtKB-UniRule"/>
</dbReference>
<dbReference type="GO" id="GO:0003899">
    <property type="term" value="F:DNA-directed RNA polymerase activity"/>
    <property type="evidence" value="ECO:0007669"/>
    <property type="project" value="UniProtKB-UniRule"/>
</dbReference>
<dbReference type="GO" id="GO:0008270">
    <property type="term" value="F:zinc ion binding"/>
    <property type="evidence" value="ECO:0007669"/>
    <property type="project" value="UniProtKB-UniRule"/>
</dbReference>
<dbReference type="GO" id="GO:0006351">
    <property type="term" value="P:DNA-templated transcription"/>
    <property type="evidence" value="ECO:0007669"/>
    <property type="project" value="UniProtKB-UniRule"/>
</dbReference>
<dbReference type="CDD" id="cd02655">
    <property type="entry name" value="RNAP_beta'_C"/>
    <property type="match status" value="1"/>
</dbReference>
<dbReference type="FunFam" id="1.10.150.390:FF:000002">
    <property type="entry name" value="DNA-directed RNA polymerase subunit beta"/>
    <property type="match status" value="1"/>
</dbReference>
<dbReference type="Gene3D" id="1.10.132.30">
    <property type="match status" value="1"/>
</dbReference>
<dbReference type="Gene3D" id="1.10.150.390">
    <property type="match status" value="1"/>
</dbReference>
<dbReference type="Gene3D" id="1.10.1790.20">
    <property type="match status" value="1"/>
</dbReference>
<dbReference type="Gene3D" id="2.40.50.100">
    <property type="match status" value="1"/>
</dbReference>
<dbReference type="Gene3D" id="1.10.274.100">
    <property type="entry name" value="RNA polymerase Rpb1, domain 3"/>
    <property type="match status" value="1"/>
</dbReference>
<dbReference type="HAMAP" id="MF_01324">
    <property type="entry name" value="RNApol_bact_RpoC2"/>
    <property type="match status" value="1"/>
</dbReference>
<dbReference type="InterPro" id="IPR012756">
    <property type="entry name" value="DNA-dir_RpoC2_beta_pp"/>
</dbReference>
<dbReference type="InterPro" id="IPR045867">
    <property type="entry name" value="DNA-dir_RpoC_beta_prime"/>
</dbReference>
<dbReference type="InterPro" id="IPR007066">
    <property type="entry name" value="RNA_pol_Rpb1_3"/>
</dbReference>
<dbReference type="InterPro" id="IPR042102">
    <property type="entry name" value="RNA_pol_Rpb1_3_sf"/>
</dbReference>
<dbReference type="InterPro" id="IPR007083">
    <property type="entry name" value="RNA_pol_Rpb1_4"/>
</dbReference>
<dbReference type="InterPro" id="IPR007081">
    <property type="entry name" value="RNA_pol_Rpb1_5"/>
</dbReference>
<dbReference type="InterPro" id="IPR038120">
    <property type="entry name" value="Rpb1_funnel_sf"/>
</dbReference>
<dbReference type="NCBIfam" id="TIGR02388">
    <property type="entry name" value="rpoC2_cyan"/>
    <property type="match status" value="1"/>
</dbReference>
<dbReference type="PANTHER" id="PTHR19376">
    <property type="entry name" value="DNA-DIRECTED RNA POLYMERASE"/>
    <property type="match status" value="1"/>
</dbReference>
<dbReference type="PANTHER" id="PTHR19376:SF68">
    <property type="entry name" value="DNA-DIRECTED RNA POLYMERASE SUBUNIT BETA"/>
    <property type="match status" value="1"/>
</dbReference>
<dbReference type="Pfam" id="PF04983">
    <property type="entry name" value="RNA_pol_Rpb1_3"/>
    <property type="match status" value="1"/>
</dbReference>
<dbReference type="Pfam" id="PF05000">
    <property type="entry name" value="RNA_pol_Rpb1_4"/>
    <property type="match status" value="1"/>
</dbReference>
<dbReference type="Pfam" id="PF04998">
    <property type="entry name" value="RNA_pol_Rpb1_5"/>
    <property type="match status" value="2"/>
</dbReference>
<dbReference type="SUPFAM" id="SSF64484">
    <property type="entry name" value="beta and beta-prime subunits of DNA dependent RNA-polymerase"/>
    <property type="match status" value="1"/>
</dbReference>
<gene>
    <name evidence="1" type="primary">rpoC2</name>
</gene>
<keyword id="KW-0150">Chloroplast</keyword>
<keyword id="KW-0240">DNA-directed RNA polymerase</keyword>
<keyword id="KW-0479">Metal-binding</keyword>
<keyword id="KW-0548">Nucleotidyltransferase</keyword>
<keyword id="KW-0934">Plastid</keyword>
<keyword id="KW-0804">Transcription</keyword>
<keyword id="KW-0808">Transferase</keyword>
<keyword id="KW-0862">Zinc</keyword>
<accession>A6MVX2</accession>
<proteinExistence type="inferred from homology"/>
<reference key="1">
    <citation type="journal article" date="2007" name="Mol. Biol. Evol.">
        <title>Plastid genome sequence of the cryptophyte alga Rhodomonas salina CCMP1319: lateral transfer of putative DNA replication machinery and a test of chromist plastid phylogeny.</title>
        <authorList>
            <person name="Khan H."/>
            <person name="Parks N."/>
            <person name="Kozera C."/>
            <person name="Curtis B.A."/>
            <person name="Parsons B.J."/>
            <person name="Bowman S."/>
            <person name="Archibald J.M."/>
        </authorList>
    </citation>
    <scope>NUCLEOTIDE SEQUENCE [LARGE SCALE GENOMIC DNA]</scope>
    <source>
        <strain>CCMP1319 / NEPCC76 / CS-174</strain>
    </source>
</reference>
<feature type="chain" id="PRO_0000353588" description="DNA-directed RNA polymerase subunit beta''">
    <location>
        <begin position="1"/>
        <end position="1303"/>
    </location>
</feature>
<feature type="binding site" evidence="1">
    <location>
        <position position="225"/>
    </location>
    <ligand>
        <name>Zn(2+)</name>
        <dbReference type="ChEBI" id="CHEBI:29105"/>
    </ligand>
</feature>
<feature type="binding site" evidence="1">
    <location>
        <position position="299"/>
    </location>
    <ligand>
        <name>Zn(2+)</name>
        <dbReference type="ChEBI" id="CHEBI:29105"/>
    </ligand>
</feature>
<feature type="binding site" evidence="1">
    <location>
        <position position="306"/>
    </location>
    <ligand>
        <name>Zn(2+)</name>
        <dbReference type="ChEBI" id="CHEBI:29105"/>
    </ligand>
</feature>
<feature type="binding site" evidence="1">
    <location>
        <position position="309"/>
    </location>
    <ligand>
        <name>Zn(2+)</name>
        <dbReference type="ChEBI" id="CHEBI:29105"/>
    </ligand>
</feature>
<protein>
    <recommendedName>
        <fullName evidence="1">DNA-directed RNA polymerase subunit beta''</fullName>
        <ecNumber evidence="1">2.7.7.6</ecNumber>
    </recommendedName>
    <alternativeName>
        <fullName evidence="1">PEP</fullName>
    </alternativeName>
    <alternativeName>
        <fullName evidence="1">Plastid-encoded RNA polymerase subunit beta''</fullName>
        <shortName evidence="1">RNA polymerase subunit beta''</shortName>
    </alternativeName>
</protein>
<organism>
    <name type="scientific">Rhodomonas salina</name>
    <name type="common">Cryptomonas salina</name>
    <dbReference type="NCBI Taxonomy" id="52970"/>
    <lineage>
        <taxon>Eukaryota</taxon>
        <taxon>Cryptophyceae</taxon>
        <taxon>Pyrenomonadales</taxon>
        <taxon>Pyrenomonadaceae</taxon>
        <taxon>Rhodomonas</taxon>
    </lineage>
</organism>
<name>RPOC2_RHDSA</name>